<organism>
    <name type="scientific">Shewanella sediminis (strain HAW-EB3)</name>
    <dbReference type="NCBI Taxonomy" id="425104"/>
    <lineage>
        <taxon>Bacteria</taxon>
        <taxon>Pseudomonadati</taxon>
        <taxon>Pseudomonadota</taxon>
        <taxon>Gammaproteobacteria</taxon>
        <taxon>Alteromonadales</taxon>
        <taxon>Shewanellaceae</taxon>
        <taxon>Shewanella</taxon>
    </lineage>
</organism>
<name>SFSA_SHESH</name>
<sequence length="256" mass="28083">MQFTPPFEQGVLLRRYKRFLTDIRLSDGSEVTIHCPNTGSMKNCLFPGEKVWFSTSDNPKRKYSRTWEQAESDVGHIIGINTGRANQLAEDAIKAGVITELSGYHSLKREVKYGSENSRIDILLSDDTGSTDTSFSGTPPTNTEPANTKAKPNCYVEVKSCTLLEEGQGYFPDAVTTRGQKHLRELMEMVESGHRGVLLFVVQHTGIDSVQAAAHIDPDYASLLTKAHSAGVEVIAYSAEMSPKGASLLKSCPVKL</sequence>
<feature type="chain" id="PRO_1000075549" description="Sugar fermentation stimulation protein homolog">
    <location>
        <begin position="1"/>
        <end position="256"/>
    </location>
</feature>
<feature type="region of interest" description="Disordered" evidence="2">
    <location>
        <begin position="128"/>
        <end position="149"/>
    </location>
</feature>
<feature type="compositionally biased region" description="Low complexity" evidence="2">
    <location>
        <begin position="128"/>
        <end position="141"/>
    </location>
</feature>
<keyword id="KW-1185">Reference proteome</keyword>
<dbReference type="EMBL" id="CP000821">
    <property type="protein sequence ID" value="ABV38502.1"/>
    <property type="molecule type" value="Genomic_DNA"/>
</dbReference>
<dbReference type="RefSeq" id="WP_012144232.1">
    <property type="nucleotide sequence ID" value="NC_009831.1"/>
</dbReference>
<dbReference type="SMR" id="A8G079"/>
<dbReference type="STRING" id="425104.Ssed_3898"/>
<dbReference type="KEGG" id="sse:Ssed_3898"/>
<dbReference type="eggNOG" id="COG1489">
    <property type="taxonomic scope" value="Bacteria"/>
</dbReference>
<dbReference type="HOGENOM" id="CLU_052299_2_0_6"/>
<dbReference type="OrthoDB" id="9802365at2"/>
<dbReference type="Proteomes" id="UP000002015">
    <property type="component" value="Chromosome"/>
</dbReference>
<dbReference type="GO" id="GO:0003677">
    <property type="term" value="F:DNA binding"/>
    <property type="evidence" value="ECO:0007669"/>
    <property type="project" value="InterPro"/>
</dbReference>
<dbReference type="CDD" id="cd22359">
    <property type="entry name" value="SfsA-like_bacterial"/>
    <property type="match status" value="1"/>
</dbReference>
<dbReference type="FunFam" id="2.40.50.580:FF:000001">
    <property type="entry name" value="Sugar fermentation stimulation protein A"/>
    <property type="match status" value="1"/>
</dbReference>
<dbReference type="Gene3D" id="2.40.50.580">
    <property type="match status" value="1"/>
</dbReference>
<dbReference type="Gene3D" id="3.40.1350.60">
    <property type="match status" value="1"/>
</dbReference>
<dbReference type="HAMAP" id="MF_00095">
    <property type="entry name" value="SfsA"/>
    <property type="match status" value="1"/>
</dbReference>
<dbReference type="InterPro" id="IPR005224">
    <property type="entry name" value="SfsA"/>
</dbReference>
<dbReference type="InterPro" id="IPR040452">
    <property type="entry name" value="SfsA_C"/>
</dbReference>
<dbReference type="InterPro" id="IPR041465">
    <property type="entry name" value="SfsA_N"/>
</dbReference>
<dbReference type="PANTHER" id="PTHR30545">
    <property type="entry name" value="SUGAR FERMENTATION STIMULATION PROTEIN A"/>
    <property type="match status" value="1"/>
</dbReference>
<dbReference type="PANTHER" id="PTHR30545:SF2">
    <property type="entry name" value="SUGAR FERMENTATION STIMULATION PROTEIN A"/>
    <property type="match status" value="1"/>
</dbReference>
<dbReference type="Pfam" id="PF03749">
    <property type="entry name" value="SfsA"/>
    <property type="match status" value="2"/>
</dbReference>
<dbReference type="Pfam" id="PF17746">
    <property type="entry name" value="SfsA_N"/>
    <property type="match status" value="1"/>
</dbReference>
<gene>
    <name evidence="1" type="primary">sfsA</name>
    <name type="ordered locus">Ssed_3898</name>
</gene>
<reference key="1">
    <citation type="submission" date="2007-08" db="EMBL/GenBank/DDBJ databases">
        <title>Complete sequence of Shewanella sediminis HAW-EB3.</title>
        <authorList>
            <consortium name="US DOE Joint Genome Institute"/>
            <person name="Copeland A."/>
            <person name="Lucas S."/>
            <person name="Lapidus A."/>
            <person name="Barry K."/>
            <person name="Glavina del Rio T."/>
            <person name="Dalin E."/>
            <person name="Tice H."/>
            <person name="Pitluck S."/>
            <person name="Chertkov O."/>
            <person name="Brettin T."/>
            <person name="Bruce D."/>
            <person name="Detter J.C."/>
            <person name="Han C."/>
            <person name="Schmutz J."/>
            <person name="Larimer F."/>
            <person name="Land M."/>
            <person name="Hauser L."/>
            <person name="Kyrpides N."/>
            <person name="Kim E."/>
            <person name="Zhao J.-S."/>
            <person name="Richardson P."/>
        </authorList>
    </citation>
    <scope>NUCLEOTIDE SEQUENCE [LARGE SCALE GENOMIC DNA]</scope>
    <source>
        <strain>HAW-EB3</strain>
    </source>
</reference>
<evidence type="ECO:0000255" key="1">
    <source>
        <dbReference type="HAMAP-Rule" id="MF_00095"/>
    </source>
</evidence>
<evidence type="ECO:0000256" key="2">
    <source>
        <dbReference type="SAM" id="MobiDB-lite"/>
    </source>
</evidence>
<protein>
    <recommendedName>
        <fullName evidence="1">Sugar fermentation stimulation protein homolog</fullName>
    </recommendedName>
</protein>
<comment type="similarity">
    <text evidence="1">Belongs to the SfsA family.</text>
</comment>
<accession>A8G079</accession>
<proteinExistence type="inferred from homology"/>